<feature type="chain" id="PRO_0000383455" description="L-lactate dehydrogenase">
    <location>
        <begin position="1"/>
        <end position="381"/>
    </location>
</feature>
<feature type="domain" description="FMN hydroxy acid dehydrogenase" evidence="1">
    <location>
        <begin position="1"/>
        <end position="380"/>
    </location>
</feature>
<feature type="active site" description="Proton acceptor" evidence="1">
    <location>
        <position position="275"/>
    </location>
</feature>
<feature type="binding site" evidence="1">
    <location>
        <position position="24"/>
    </location>
    <ligand>
        <name>substrate</name>
    </ligand>
</feature>
<feature type="binding site" evidence="1">
    <location>
        <position position="106"/>
    </location>
    <ligand>
        <name>FMN</name>
        <dbReference type="ChEBI" id="CHEBI:58210"/>
    </ligand>
</feature>
<feature type="binding site" evidence="1">
    <location>
        <position position="127"/>
    </location>
    <ligand>
        <name>FMN</name>
        <dbReference type="ChEBI" id="CHEBI:58210"/>
    </ligand>
</feature>
<feature type="binding site" evidence="1">
    <location>
        <position position="129"/>
    </location>
    <ligand>
        <name>substrate</name>
    </ligand>
</feature>
<feature type="binding site" evidence="1">
    <location>
        <position position="155"/>
    </location>
    <ligand>
        <name>FMN</name>
        <dbReference type="ChEBI" id="CHEBI:58210"/>
    </ligand>
</feature>
<feature type="binding site" evidence="1">
    <location>
        <position position="164"/>
    </location>
    <ligand>
        <name>substrate</name>
    </ligand>
</feature>
<feature type="binding site" evidence="1">
    <location>
        <position position="251"/>
    </location>
    <ligand>
        <name>FMN</name>
        <dbReference type="ChEBI" id="CHEBI:58210"/>
    </ligand>
</feature>
<feature type="binding site" evidence="1">
    <location>
        <position position="278"/>
    </location>
    <ligand>
        <name>substrate</name>
    </ligand>
</feature>
<feature type="binding site" evidence="1">
    <location>
        <begin position="306"/>
        <end position="330"/>
    </location>
    <ligand>
        <name>FMN</name>
        <dbReference type="ChEBI" id="CHEBI:58210"/>
    </ligand>
</feature>
<accession>A9R623</accession>
<reference key="1">
    <citation type="journal article" date="2010" name="J. Bacteriol.">
        <title>Genome sequence of the deep-rooted Yersinia pestis strain Angola reveals new insights into the evolution and pangenome of the plague bacterium.</title>
        <authorList>
            <person name="Eppinger M."/>
            <person name="Worsham P.L."/>
            <person name="Nikolich M.P."/>
            <person name="Riley D.R."/>
            <person name="Sebastian Y."/>
            <person name="Mou S."/>
            <person name="Achtman M."/>
            <person name="Lindler L.E."/>
            <person name="Ravel J."/>
        </authorList>
    </citation>
    <scope>NUCLEOTIDE SEQUENCE [LARGE SCALE GENOMIC DNA]</scope>
    <source>
        <strain>Angola</strain>
    </source>
</reference>
<gene>
    <name evidence="1" type="primary">lldD</name>
    <name type="ordered locus">YpAngola_A1696</name>
</gene>
<sequence length="381" mass="41259">MIISASTDYRAAAQRKLPPFLFHYIDGGAYNEQTLRRNTADLADIALRQRVLKNMSELSLETQLFGETQAMPVVLGPVGLSGMYARRGEVQAARAADKKGIPFTLSTLSVCPIEEVAPAIARPMWFQLYVLKDRGFMRNALTRAQAAGVKTLVFTVDMPVPGARYRDAHSGMSGPNAAARRLLQAIAHPQWAWDVGLNGKPHDLGNISAYLGKPTTLEDYMGWIATNFDPSISWKDLEWVREFWQGPMIIKGILDPEDAKDAVKFGADGIVVSNHGGRQLDGVLSTARALPAIADAVKGDITILADSGIRTGLDVVRMIALGADSVLLGRAFVYALATAGEAGVINLLTLIEQEMRVAMTLTGAKRIADINRDSLAVSERG</sequence>
<dbReference type="EC" id="1.1.-.-" evidence="1"/>
<dbReference type="EMBL" id="CP000901">
    <property type="protein sequence ID" value="ABX85222.1"/>
    <property type="molecule type" value="Genomic_DNA"/>
</dbReference>
<dbReference type="RefSeq" id="WP_002211919.1">
    <property type="nucleotide sequence ID" value="NZ_CP009935.1"/>
</dbReference>
<dbReference type="SMR" id="A9R623"/>
<dbReference type="GeneID" id="57977002"/>
<dbReference type="KEGG" id="ypg:YpAngola_A1696"/>
<dbReference type="PATRIC" id="fig|349746.12.peg.2667"/>
<dbReference type="GO" id="GO:0005886">
    <property type="term" value="C:plasma membrane"/>
    <property type="evidence" value="ECO:0007669"/>
    <property type="project" value="UniProtKB-SubCell"/>
</dbReference>
<dbReference type="GO" id="GO:0010181">
    <property type="term" value="F:FMN binding"/>
    <property type="evidence" value="ECO:0007669"/>
    <property type="project" value="InterPro"/>
</dbReference>
<dbReference type="GO" id="GO:0004459">
    <property type="term" value="F:L-lactate dehydrogenase activity"/>
    <property type="evidence" value="ECO:0007669"/>
    <property type="project" value="UniProtKB-UniRule"/>
</dbReference>
<dbReference type="GO" id="GO:0009060">
    <property type="term" value="P:aerobic respiration"/>
    <property type="evidence" value="ECO:0007669"/>
    <property type="project" value="TreeGrafter"/>
</dbReference>
<dbReference type="GO" id="GO:0006089">
    <property type="term" value="P:lactate metabolic process"/>
    <property type="evidence" value="ECO:0007669"/>
    <property type="project" value="UniProtKB-UniRule"/>
</dbReference>
<dbReference type="CDD" id="cd02809">
    <property type="entry name" value="alpha_hydroxyacid_oxid_FMN"/>
    <property type="match status" value="1"/>
</dbReference>
<dbReference type="FunFam" id="3.20.20.70:FF:000029">
    <property type="entry name" value="L-lactate dehydrogenase"/>
    <property type="match status" value="1"/>
</dbReference>
<dbReference type="Gene3D" id="3.20.20.70">
    <property type="entry name" value="Aldolase class I"/>
    <property type="match status" value="1"/>
</dbReference>
<dbReference type="HAMAP" id="MF_01559">
    <property type="entry name" value="L_lact_dehydr"/>
    <property type="match status" value="1"/>
</dbReference>
<dbReference type="InterPro" id="IPR013785">
    <property type="entry name" value="Aldolase_TIM"/>
</dbReference>
<dbReference type="InterPro" id="IPR012133">
    <property type="entry name" value="Alpha-hydoxy_acid_DH_FMN"/>
</dbReference>
<dbReference type="InterPro" id="IPR000262">
    <property type="entry name" value="FMN-dep_DH"/>
</dbReference>
<dbReference type="InterPro" id="IPR037396">
    <property type="entry name" value="FMN_HAD"/>
</dbReference>
<dbReference type="InterPro" id="IPR008259">
    <property type="entry name" value="FMN_hydac_DH_AS"/>
</dbReference>
<dbReference type="InterPro" id="IPR020920">
    <property type="entry name" value="LldD"/>
</dbReference>
<dbReference type="NCBIfam" id="NF033901">
    <property type="entry name" value="L_lactate_LldD"/>
    <property type="match status" value="1"/>
</dbReference>
<dbReference type="NCBIfam" id="NF008398">
    <property type="entry name" value="PRK11197.1"/>
    <property type="match status" value="1"/>
</dbReference>
<dbReference type="PANTHER" id="PTHR10578:SF85">
    <property type="entry name" value="L-LACTATE DEHYDROGENASE"/>
    <property type="match status" value="1"/>
</dbReference>
<dbReference type="PANTHER" id="PTHR10578">
    <property type="entry name" value="S -2-HYDROXY-ACID OXIDASE-RELATED"/>
    <property type="match status" value="1"/>
</dbReference>
<dbReference type="Pfam" id="PF01070">
    <property type="entry name" value="FMN_dh"/>
    <property type="match status" value="1"/>
</dbReference>
<dbReference type="PIRSF" id="PIRSF000138">
    <property type="entry name" value="Al-hdrx_acd_dh"/>
    <property type="match status" value="1"/>
</dbReference>
<dbReference type="SUPFAM" id="SSF51395">
    <property type="entry name" value="FMN-linked oxidoreductases"/>
    <property type="match status" value="1"/>
</dbReference>
<dbReference type="PROSITE" id="PS00557">
    <property type="entry name" value="FMN_HYDROXY_ACID_DH_1"/>
    <property type="match status" value="1"/>
</dbReference>
<dbReference type="PROSITE" id="PS51349">
    <property type="entry name" value="FMN_HYDROXY_ACID_DH_2"/>
    <property type="match status" value="1"/>
</dbReference>
<organism>
    <name type="scientific">Yersinia pestis bv. Antiqua (strain Angola)</name>
    <dbReference type="NCBI Taxonomy" id="349746"/>
    <lineage>
        <taxon>Bacteria</taxon>
        <taxon>Pseudomonadati</taxon>
        <taxon>Pseudomonadota</taxon>
        <taxon>Gammaproteobacteria</taxon>
        <taxon>Enterobacterales</taxon>
        <taxon>Yersiniaceae</taxon>
        <taxon>Yersinia</taxon>
    </lineage>
</organism>
<name>LLDD_YERPG</name>
<protein>
    <recommendedName>
        <fullName evidence="1">L-lactate dehydrogenase</fullName>
        <ecNumber evidence="1">1.1.-.-</ecNumber>
    </recommendedName>
</protein>
<keyword id="KW-0997">Cell inner membrane</keyword>
<keyword id="KW-1003">Cell membrane</keyword>
<keyword id="KW-0285">Flavoprotein</keyword>
<keyword id="KW-0288">FMN</keyword>
<keyword id="KW-0472">Membrane</keyword>
<keyword id="KW-0560">Oxidoreductase</keyword>
<evidence type="ECO:0000255" key="1">
    <source>
        <dbReference type="HAMAP-Rule" id="MF_01559"/>
    </source>
</evidence>
<comment type="function">
    <text evidence="1">Catalyzes the conversion of L-lactate to pyruvate. Is coupled to the respiratory chain.</text>
</comment>
<comment type="catalytic activity">
    <reaction evidence="1">
        <text>(S)-lactate + A = pyruvate + AH2</text>
        <dbReference type="Rhea" id="RHEA:45816"/>
        <dbReference type="ChEBI" id="CHEBI:13193"/>
        <dbReference type="ChEBI" id="CHEBI:15361"/>
        <dbReference type="ChEBI" id="CHEBI:16651"/>
        <dbReference type="ChEBI" id="CHEBI:17499"/>
    </reaction>
</comment>
<comment type="cofactor">
    <cofactor evidence="1">
        <name>FMN</name>
        <dbReference type="ChEBI" id="CHEBI:58210"/>
    </cofactor>
</comment>
<comment type="subcellular location">
    <subcellularLocation>
        <location evidence="1">Cell inner membrane</location>
        <topology evidence="1">Peripheral membrane protein</topology>
    </subcellularLocation>
</comment>
<comment type="similarity">
    <text evidence="1">Belongs to the FMN-dependent alpha-hydroxy acid dehydrogenase family.</text>
</comment>
<proteinExistence type="inferred from homology"/>